<protein>
    <recommendedName>
        <fullName evidence="1">N-acetyl-gamma-glutamyl-phosphate reductase</fullName>
        <shortName evidence="1">AGPR</shortName>
        <ecNumber evidence="1">1.2.1.38</ecNumber>
    </recommendedName>
    <alternativeName>
        <fullName evidence="1">N-acetyl-glutamate semialdehyde dehydrogenase</fullName>
        <shortName evidence="1">NAGSA dehydrogenase</shortName>
    </alternativeName>
</protein>
<gene>
    <name evidence="1" type="primary">argC</name>
    <name type="ordered locus">BR0788</name>
    <name type="ordered locus">BS1330_I0784</name>
</gene>
<sequence>MKPKIFIDGEHGTTGLQIRTRLAERDDLEVISIPEAERRNKDLRADYLRAADIAILCLPDDASKEAVSLLEGHNSTRIIDTSTAHRVHPDWAYGFAELAKGQRERIAEARLVANPGCYPTGAIALVRPLRDAGLLPADYPVSVNAVSGYTGGGKQLIAQMEDRNHPDYLAANNFLYGLPLKHKHVPELQLHGRLDRRPIFSPSVGRFPQGMIVQVPLFLSELEGSPSLAKVHAVLTEHYAGQDIVEVVPLEESAKLPRVDAEELAGKDGMKLFVFGTEDHGQVNLVALLDNLGKGASGAAVQNMNLMLGK</sequence>
<dbReference type="EC" id="1.2.1.38" evidence="1"/>
<dbReference type="EMBL" id="AE014291">
    <property type="protein sequence ID" value="AAN29717.1"/>
    <property type="molecule type" value="Genomic_DNA"/>
</dbReference>
<dbReference type="EMBL" id="CP002997">
    <property type="protein sequence ID" value="AEM18134.1"/>
    <property type="molecule type" value="Genomic_DNA"/>
</dbReference>
<dbReference type="RefSeq" id="WP_002963923.1">
    <property type="nucleotide sequence ID" value="NZ_KN046804.1"/>
</dbReference>
<dbReference type="SMR" id="P59314"/>
<dbReference type="GeneID" id="93016823"/>
<dbReference type="KEGG" id="bms:BR0788"/>
<dbReference type="KEGG" id="bsi:BS1330_I0784"/>
<dbReference type="PATRIC" id="fig|204722.22.peg.1061"/>
<dbReference type="HOGENOM" id="CLU_077118_0_0_5"/>
<dbReference type="PhylomeDB" id="P59314"/>
<dbReference type="UniPathway" id="UPA00068">
    <property type="reaction ID" value="UER00108"/>
</dbReference>
<dbReference type="Proteomes" id="UP000007104">
    <property type="component" value="Chromosome I"/>
</dbReference>
<dbReference type="GO" id="GO:0005737">
    <property type="term" value="C:cytoplasm"/>
    <property type="evidence" value="ECO:0007669"/>
    <property type="project" value="UniProtKB-SubCell"/>
</dbReference>
<dbReference type="GO" id="GO:0003942">
    <property type="term" value="F:N-acetyl-gamma-glutamyl-phosphate reductase activity"/>
    <property type="evidence" value="ECO:0007669"/>
    <property type="project" value="UniProtKB-UniRule"/>
</dbReference>
<dbReference type="GO" id="GO:0051287">
    <property type="term" value="F:NAD binding"/>
    <property type="evidence" value="ECO:0007669"/>
    <property type="project" value="InterPro"/>
</dbReference>
<dbReference type="GO" id="GO:0006526">
    <property type="term" value="P:L-arginine biosynthetic process"/>
    <property type="evidence" value="ECO:0007669"/>
    <property type="project" value="UniProtKB-UniRule"/>
</dbReference>
<dbReference type="CDD" id="cd23935">
    <property type="entry name" value="AGPR_2_C"/>
    <property type="match status" value="1"/>
</dbReference>
<dbReference type="CDD" id="cd17896">
    <property type="entry name" value="AGPR_2_N"/>
    <property type="match status" value="1"/>
</dbReference>
<dbReference type="Gene3D" id="3.30.360.10">
    <property type="entry name" value="Dihydrodipicolinate Reductase, domain 2"/>
    <property type="match status" value="1"/>
</dbReference>
<dbReference type="Gene3D" id="3.40.50.720">
    <property type="entry name" value="NAD(P)-binding Rossmann-like Domain"/>
    <property type="match status" value="1"/>
</dbReference>
<dbReference type="HAMAP" id="MF_01110">
    <property type="entry name" value="ArgC_type2"/>
    <property type="match status" value="1"/>
</dbReference>
<dbReference type="InterPro" id="IPR023013">
    <property type="entry name" value="AGPR_AS"/>
</dbReference>
<dbReference type="InterPro" id="IPR010136">
    <property type="entry name" value="AGPR_type-2"/>
</dbReference>
<dbReference type="InterPro" id="IPR036291">
    <property type="entry name" value="NAD(P)-bd_dom_sf"/>
</dbReference>
<dbReference type="InterPro" id="IPR050085">
    <property type="entry name" value="NAGSA_dehydrogenase"/>
</dbReference>
<dbReference type="InterPro" id="IPR000534">
    <property type="entry name" value="Semialdehyde_DH_NAD-bd"/>
</dbReference>
<dbReference type="NCBIfam" id="TIGR01851">
    <property type="entry name" value="argC_other"/>
    <property type="match status" value="1"/>
</dbReference>
<dbReference type="PANTHER" id="PTHR32338:SF10">
    <property type="entry name" value="N-ACETYL-GAMMA-GLUTAMYL-PHOSPHATE REDUCTASE, CHLOROPLASTIC-RELATED"/>
    <property type="match status" value="1"/>
</dbReference>
<dbReference type="PANTHER" id="PTHR32338">
    <property type="entry name" value="N-ACETYL-GAMMA-GLUTAMYL-PHOSPHATE REDUCTASE, CHLOROPLASTIC-RELATED-RELATED"/>
    <property type="match status" value="1"/>
</dbReference>
<dbReference type="Pfam" id="PF01118">
    <property type="entry name" value="Semialdhyde_dh"/>
    <property type="match status" value="1"/>
</dbReference>
<dbReference type="Pfam" id="PF22698">
    <property type="entry name" value="Semialdhyde_dhC_1"/>
    <property type="match status" value="1"/>
</dbReference>
<dbReference type="SMART" id="SM00859">
    <property type="entry name" value="Semialdhyde_dh"/>
    <property type="match status" value="1"/>
</dbReference>
<dbReference type="SUPFAM" id="SSF55347">
    <property type="entry name" value="Glyceraldehyde-3-phosphate dehydrogenase-like, C-terminal domain"/>
    <property type="match status" value="1"/>
</dbReference>
<dbReference type="SUPFAM" id="SSF51735">
    <property type="entry name" value="NAD(P)-binding Rossmann-fold domains"/>
    <property type="match status" value="1"/>
</dbReference>
<dbReference type="PROSITE" id="PS01224">
    <property type="entry name" value="ARGC"/>
    <property type="match status" value="1"/>
</dbReference>
<comment type="function">
    <text evidence="1">Catalyzes the NADPH-dependent reduction of N-acetyl-5-glutamyl phosphate to yield N-acetyl-L-glutamate 5-semialdehyde.</text>
</comment>
<comment type="catalytic activity">
    <reaction evidence="1">
        <text>N-acetyl-L-glutamate 5-semialdehyde + phosphate + NADP(+) = N-acetyl-L-glutamyl 5-phosphate + NADPH + H(+)</text>
        <dbReference type="Rhea" id="RHEA:21588"/>
        <dbReference type="ChEBI" id="CHEBI:15378"/>
        <dbReference type="ChEBI" id="CHEBI:29123"/>
        <dbReference type="ChEBI" id="CHEBI:43474"/>
        <dbReference type="ChEBI" id="CHEBI:57783"/>
        <dbReference type="ChEBI" id="CHEBI:57936"/>
        <dbReference type="ChEBI" id="CHEBI:58349"/>
        <dbReference type="EC" id="1.2.1.38"/>
    </reaction>
</comment>
<comment type="pathway">
    <text evidence="1">Amino-acid biosynthesis; L-arginine biosynthesis; N(2)-acetyl-L-ornithine from L-glutamate: step 3/4.</text>
</comment>
<comment type="subcellular location">
    <subcellularLocation>
        <location evidence="1">Cytoplasm</location>
    </subcellularLocation>
</comment>
<comment type="similarity">
    <text evidence="1">Belongs to the NAGSA dehydrogenase family. Type 2 subfamily.</text>
</comment>
<proteinExistence type="inferred from homology"/>
<name>ARGC_BRUSU</name>
<evidence type="ECO:0000255" key="1">
    <source>
        <dbReference type="HAMAP-Rule" id="MF_01110"/>
    </source>
</evidence>
<feature type="chain" id="PRO_0000112505" description="N-acetyl-gamma-glutamyl-phosphate reductase">
    <location>
        <begin position="1"/>
        <end position="310"/>
    </location>
</feature>
<feature type="active site" evidence="1">
    <location>
        <position position="117"/>
    </location>
</feature>
<accession>P59314</accession>
<accession>G0K8T6</accession>
<keyword id="KW-0028">Amino-acid biosynthesis</keyword>
<keyword id="KW-0055">Arginine biosynthesis</keyword>
<keyword id="KW-0963">Cytoplasm</keyword>
<keyword id="KW-0521">NADP</keyword>
<keyword id="KW-0560">Oxidoreductase</keyword>
<organism>
    <name type="scientific">Brucella suis biovar 1 (strain 1330)</name>
    <dbReference type="NCBI Taxonomy" id="204722"/>
    <lineage>
        <taxon>Bacteria</taxon>
        <taxon>Pseudomonadati</taxon>
        <taxon>Pseudomonadota</taxon>
        <taxon>Alphaproteobacteria</taxon>
        <taxon>Hyphomicrobiales</taxon>
        <taxon>Brucellaceae</taxon>
        <taxon>Brucella/Ochrobactrum group</taxon>
        <taxon>Brucella</taxon>
    </lineage>
</organism>
<reference key="1">
    <citation type="journal article" date="2002" name="Proc. Natl. Acad. Sci. U.S.A.">
        <title>The Brucella suis genome reveals fundamental similarities between animal and plant pathogens and symbionts.</title>
        <authorList>
            <person name="Paulsen I.T."/>
            <person name="Seshadri R."/>
            <person name="Nelson K.E."/>
            <person name="Eisen J.A."/>
            <person name="Heidelberg J.F."/>
            <person name="Read T.D."/>
            <person name="Dodson R.J."/>
            <person name="Umayam L.A."/>
            <person name="Brinkac L.M."/>
            <person name="Beanan M.J."/>
            <person name="Daugherty S.C."/>
            <person name="DeBoy R.T."/>
            <person name="Durkin A.S."/>
            <person name="Kolonay J.F."/>
            <person name="Madupu R."/>
            <person name="Nelson W.C."/>
            <person name="Ayodeji B."/>
            <person name="Kraul M."/>
            <person name="Shetty J."/>
            <person name="Malek J.A."/>
            <person name="Van Aken S.E."/>
            <person name="Riedmuller S."/>
            <person name="Tettelin H."/>
            <person name="Gill S.R."/>
            <person name="White O."/>
            <person name="Salzberg S.L."/>
            <person name="Hoover D.L."/>
            <person name="Lindler L.E."/>
            <person name="Halling S.M."/>
            <person name="Boyle S.M."/>
            <person name="Fraser C.M."/>
        </authorList>
    </citation>
    <scope>NUCLEOTIDE SEQUENCE [LARGE SCALE GENOMIC DNA]</scope>
    <source>
        <strain>1330</strain>
    </source>
</reference>
<reference key="2">
    <citation type="journal article" date="2011" name="J. Bacteriol.">
        <title>Revised genome sequence of Brucella suis 1330.</title>
        <authorList>
            <person name="Tae H."/>
            <person name="Shallom S."/>
            <person name="Settlage R."/>
            <person name="Preston D."/>
            <person name="Adams L.G."/>
            <person name="Garner H.R."/>
        </authorList>
    </citation>
    <scope>NUCLEOTIDE SEQUENCE [LARGE SCALE GENOMIC DNA]</scope>
    <source>
        <strain>1330</strain>
    </source>
</reference>